<proteinExistence type="inferred from homology"/>
<keyword id="KW-0963">Cytoplasm</keyword>
<keyword id="KW-0251">Elongation factor</keyword>
<keyword id="KW-0648">Protein biosynthesis</keyword>
<organism>
    <name type="scientific">Solibacter usitatus (strain Ellin6076)</name>
    <dbReference type="NCBI Taxonomy" id="234267"/>
    <lineage>
        <taxon>Bacteria</taxon>
        <taxon>Pseudomonadati</taxon>
        <taxon>Acidobacteriota</taxon>
        <taxon>Terriglobia</taxon>
        <taxon>Bryobacterales</taxon>
        <taxon>Solibacteraceae</taxon>
        <taxon>Candidatus Solibacter</taxon>
    </lineage>
</organism>
<evidence type="ECO:0000255" key="1">
    <source>
        <dbReference type="HAMAP-Rule" id="MF_00050"/>
    </source>
</evidence>
<sequence>MAEITASLVKQLRERTGAGMMECKSALVEAKGDLTEGEVVLRKRGIASAGKKASRATKQGLIGTYIHHGGQLGVMVEVNCESDFVARTDDFQELVHDIAMHIAAADPKFIRKEDVTEDVIEKEKDIHKARALAEGKPEKMLDKITEGRMSKFYEEICLLEQPFVKEATLTVGQLVKTKIAKLGENISVARFVRFKVGDAQGSDSGSETPAAE</sequence>
<comment type="function">
    <text evidence="1">Associates with the EF-Tu.GDP complex and induces the exchange of GDP to GTP. It remains bound to the aminoacyl-tRNA.EF-Tu.GTP complex up to the GTP hydrolysis stage on the ribosome.</text>
</comment>
<comment type="subcellular location">
    <subcellularLocation>
        <location evidence="1">Cytoplasm</location>
    </subcellularLocation>
</comment>
<comment type="similarity">
    <text evidence="1">Belongs to the EF-Ts family.</text>
</comment>
<gene>
    <name evidence="1" type="primary">tsf</name>
    <name type="ordered locus">Acid_0905</name>
</gene>
<feature type="chain" id="PRO_0000323465" description="Elongation factor Ts">
    <location>
        <begin position="1"/>
        <end position="212"/>
    </location>
</feature>
<feature type="region of interest" description="Involved in Mg(2+) ion dislocation from EF-Tu" evidence="1">
    <location>
        <begin position="82"/>
        <end position="85"/>
    </location>
</feature>
<dbReference type="EMBL" id="CP000473">
    <property type="protein sequence ID" value="ABJ81904.1"/>
    <property type="molecule type" value="Genomic_DNA"/>
</dbReference>
<dbReference type="SMR" id="Q02AL2"/>
<dbReference type="FunCoup" id="Q02AL2">
    <property type="interactions" value="625"/>
</dbReference>
<dbReference type="STRING" id="234267.Acid_0905"/>
<dbReference type="KEGG" id="sus:Acid_0905"/>
<dbReference type="eggNOG" id="COG0264">
    <property type="taxonomic scope" value="Bacteria"/>
</dbReference>
<dbReference type="HOGENOM" id="CLU_047155_1_1_0"/>
<dbReference type="InParanoid" id="Q02AL2"/>
<dbReference type="OrthoDB" id="9808348at2"/>
<dbReference type="GO" id="GO:0005737">
    <property type="term" value="C:cytoplasm"/>
    <property type="evidence" value="ECO:0007669"/>
    <property type="project" value="UniProtKB-SubCell"/>
</dbReference>
<dbReference type="GO" id="GO:0003746">
    <property type="term" value="F:translation elongation factor activity"/>
    <property type="evidence" value="ECO:0007669"/>
    <property type="project" value="UniProtKB-UniRule"/>
</dbReference>
<dbReference type="CDD" id="cd14275">
    <property type="entry name" value="UBA_EF-Ts"/>
    <property type="match status" value="1"/>
</dbReference>
<dbReference type="FunFam" id="1.10.286.20:FF:000001">
    <property type="entry name" value="Elongation factor Ts"/>
    <property type="match status" value="1"/>
</dbReference>
<dbReference type="FunFam" id="1.10.8.10:FF:000001">
    <property type="entry name" value="Elongation factor Ts"/>
    <property type="match status" value="1"/>
</dbReference>
<dbReference type="Gene3D" id="1.10.286.20">
    <property type="match status" value="1"/>
</dbReference>
<dbReference type="Gene3D" id="1.10.8.10">
    <property type="entry name" value="DNA helicase RuvA subunit, C-terminal domain"/>
    <property type="match status" value="1"/>
</dbReference>
<dbReference type="Gene3D" id="3.30.479.20">
    <property type="entry name" value="Elongation factor Ts, dimerisation domain"/>
    <property type="match status" value="1"/>
</dbReference>
<dbReference type="HAMAP" id="MF_00050">
    <property type="entry name" value="EF_Ts"/>
    <property type="match status" value="1"/>
</dbReference>
<dbReference type="InterPro" id="IPR036402">
    <property type="entry name" value="EF-Ts_dimer_sf"/>
</dbReference>
<dbReference type="InterPro" id="IPR001816">
    <property type="entry name" value="Transl_elong_EFTs/EF1B"/>
</dbReference>
<dbReference type="InterPro" id="IPR014039">
    <property type="entry name" value="Transl_elong_EFTs/EF1B_dimer"/>
</dbReference>
<dbReference type="InterPro" id="IPR018101">
    <property type="entry name" value="Transl_elong_Ts_CS"/>
</dbReference>
<dbReference type="InterPro" id="IPR009060">
    <property type="entry name" value="UBA-like_sf"/>
</dbReference>
<dbReference type="NCBIfam" id="TIGR00116">
    <property type="entry name" value="tsf"/>
    <property type="match status" value="2"/>
</dbReference>
<dbReference type="PANTHER" id="PTHR11741">
    <property type="entry name" value="ELONGATION FACTOR TS"/>
    <property type="match status" value="1"/>
</dbReference>
<dbReference type="PANTHER" id="PTHR11741:SF0">
    <property type="entry name" value="ELONGATION FACTOR TS, MITOCHONDRIAL"/>
    <property type="match status" value="1"/>
</dbReference>
<dbReference type="Pfam" id="PF00889">
    <property type="entry name" value="EF_TS"/>
    <property type="match status" value="1"/>
</dbReference>
<dbReference type="SUPFAM" id="SSF54713">
    <property type="entry name" value="Elongation factor Ts (EF-Ts), dimerisation domain"/>
    <property type="match status" value="1"/>
</dbReference>
<dbReference type="SUPFAM" id="SSF46934">
    <property type="entry name" value="UBA-like"/>
    <property type="match status" value="1"/>
</dbReference>
<dbReference type="PROSITE" id="PS01126">
    <property type="entry name" value="EF_TS_1"/>
    <property type="match status" value="1"/>
</dbReference>
<accession>Q02AL2</accession>
<reference key="1">
    <citation type="journal article" date="2009" name="Appl. Environ. Microbiol.">
        <title>Three genomes from the phylum Acidobacteria provide insight into the lifestyles of these microorganisms in soils.</title>
        <authorList>
            <person name="Ward N.L."/>
            <person name="Challacombe J.F."/>
            <person name="Janssen P.H."/>
            <person name="Henrissat B."/>
            <person name="Coutinho P.M."/>
            <person name="Wu M."/>
            <person name="Xie G."/>
            <person name="Haft D.H."/>
            <person name="Sait M."/>
            <person name="Badger J."/>
            <person name="Barabote R.D."/>
            <person name="Bradley B."/>
            <person name="Brettin T.S."/>
            <person name="Brinkac L.M."/>
            <person name="Bruce D."/>
            <person name="Creasy T."/>
            <person name="Daugherty S.C."/>
            <person name="Davidsen T.M."/>
            <person name="DeBoy R.T."/>
            <person name="Detter J.C."/>
            <person name="Dodson R.J."/>
            <person name="Durkin A.S."/>
            <person name="Ganapathy A."/>
            <person name="Gwinn-Giglio M."/>
            <person name="Han C.S."/>
            <person name="Khouri H."/>
            <person name="Kiss H."/>
            <person name="Kothari S.P."/>
            <person name="Madupu R."/>
            <person name="Nelson K.E."/>
            <person name="Nelson W.C."/>
            <person name="Paulsen I."/>
            <person name="Penn K."/>
            <person name="Ren Q."/>
            <person name="Rosovitz M.J."/>
            <person name="Selengut J.D."/>
            <person name="Shrivastava S."/>
            <person name="Sullivan S.A."/>
            <person name="Tapia R."/>
            <person name="Thompson L.S."/>
            <person name="Watkins K.L."/>
            <person name="Yang Q."/>
            <person name="Yu C."/>
            <person name="Zafar N."/>
            <person name="Zhou L."/>
            <person name="Kuske C.R."/>
        </authorList>
    </citation>
    <scope>NUCLEOTIDE SEQUENCE [LARGE SCALE GENOMIC DNA]</scope>
    <source>
        <strain>Ellin6076</strain>
    </source>
</reference>
<protein>
    <recommendedName>
        <fullName evidence="1">Elongation factor Ts</fullName>
        <shortName evidence="1">EF-Ts</shortName>
    </recommendedName>
</protein>
<name>EFTS_SOLUE</name>